<gene>
    <name type="primary">MT-CO2</name>
    <name type="synonym">COII</name>
    <name type="synonym">COX2</name>
    <name type="synonym">COXII</name>
    <name type="synonym">MTCO2</name>
</gene>
<protein>
    <recommendedName>
        <fullName>Cytochrome c oxidase subunit 2</fullName>
        <ecNumber>7.1.1.9</ecNumber>
    </recommendedName>
    <alternativeName>
        <fullName>Cytochrome c oxidase polypeptide II</fullName>
    </alternativeName>
</protein>
<sequence>MALPFQLGFQDATSPIMEELLHFHDHTLMIVFMISSLVLYLISSMLTTRLTHTSTMDAQEVETIWTILPAIILITIALPSLRILYMMDEINNPSMTIKTMGHQWYWSYEYTDYSELCFDSYMIPTSDLKSGGLRLLEVDNRVVIPMEMTVRMLISSEDVLHSWAVPSLGLKTDAIPGRLNQTTLLSTRPGLYYGQCSEICGSNHSFMPIVLEMVTLNCFEKWSTSML</sequence>
<geneLocation type="mitochondrion"/>
<organism>
    <name type="scientific">Phyllostomus hastatus</name>
    <name type="common">Greater spear-nosed bat</name>
    <dbReference type="NCBI Taxonomy" id="9423"/>
    <lineage>
        <taxon>Eukaryota</taxon>
        <taxon>Metazoa</taxon>
        <taxon>Chordata</taxon>
        <taxon>Craniata</taxon>
        <taxon>Vertebrata</taxon>
        <taxon>Euteleostomi</taxon>
        <taxon>Mammalia</taxon>
        <taxon>Eutheria</taxon>
        <taxon>Laurasiatheria</taxon>
        <taxon>Chiroptera</taxon>
        <taxon>Yangochiroptera</taxon>
        <taxon>Phyllostomidae</taxon>
        <taxon>Phyllostominae</taxon>
        <taxon>Phyllostomus</taxon>
    </lineage>
</organism>
<keyword id="KW-0186">Copper</keyword>
<keyword id="KW-0249">Electron transport</keyword>
<keyword id="KW-0460">Magnesium</keyword>
<keyword id="KW-0472">Membrane</keyword>
<keyword id="KW-0479">Metal-binding</keyword>
<keyword id="KW-0496">Mitochondrion</keyword>
<keyword id="KW-0999">Mitochondrion inner membrane</keyword>
<keyword id="KW-0679">Respiratory chain</keyword>
<keyword id="KW-1278">Translocase</keyword>
<keyword id="KW-0812">Transmembrane</keyword>
<keyword id="KW-1133">Transmembrane helix</keyword>
<keyword id="KW-0813">Transport</keyword>
<feature type="chain" id="PRO_0000183660" description="Cytochrome c oxidase subunit 2">
    <location>
        <begin position="1"/>
        <end position="227"/>
    </location>
</feature>
<feature type="topological domain" description="Mitochondrial intermembrane" evidence="3">
    <location>
        <begin position="1"/>
        <end position="14"/>
    </location>
</feature>
<feature type="transmembrane region" description="Helical; Name=I" evidence="3">
    <location>
        <begin position="15"/>
        <end position="45"/>
    </location>
</feature>
<feature type="topological domain" description="Mitochondrial matrix" evidence="3">
    <location>
        <begin position="46"/>
        <end position="59"/>
    </location>
</feature>
<feature type="transmembrane region" description="Helical; Name=II" evidence="3">
    <location>
        <begin position="60"/>
        <end position="87"/>
    </location>
</feature>
<feature type="topological domain" description="Mitochondrial intermembrane" evidence="3">
    <location>
        <begin position="88"/>
        <end position="227"/>
    </location>
</feature>
<feature type="binding site" evidence="3">
    <location>
        <position position="161"/>
    </location>
    <ligand>
        <name>Cu cation</name>
        <dbReference type="ChEBI" id="CHEBI:23378"/>
        <label>A1</label>
    </ligand>
</feature>
<feature type="binding site" evidence="3">
    <location>
        <position position="196"/>
    </location>
    <ligand>
        <name>Cu cation</name>
        <dbReference type="ChEBI" id="CHEBI:23378"/>
        <label>A1</label>
    </ligand>
</feature>
<feature type="binding site" evidence="3">
    <location>
        <position position="196"/>
    </location>
    <ligand>
        <name>Cu cation</name>
        <dbReference type="ChEBI" id="CHEBI:23378"/>
        <label>A2</label>
    </ligand>
</feature>
<feature type="binding site" evidence="3">
    <location>
        <position position="198"/>
    </location>
    <ligand>
        <name>Cu cation</name>
        <dbReference type="ChEBI" id="CHEBI:23378"/>
        <label>A2</label>
    </ligand>
</feature>
<feature type="binding site" evidence="3">
    <location>
        <position position="198"/>
    </location>
    <ligand>
        <name>Mg(2+)</name>
        <dbReference type="ChEBI" id="CHEBI:18420"/>
        <note>ligand shared with MT-CO1</note>
    </ligand>
</feature>
<feature type="binding site" evidence="3">
    <location>
        <position position="200"/>
    </location>
    <ligand>
        <name>Cu cation</name>
        <dbReference type="ChEBI" id="CHEBI:23378"/>
        <label>A1</label>
    </ligand>
</feature>
<feature type="binding site" evidence="3">
    <location>
        <position position="200"/>
    </location>
    <ligand>
        <name>Cu cation</name>
        <dbReference type="ChEBI" id="CHEBI:23378"/>
        <label>A2</label>
    </ligand>
</feature>
<feature type="binding site" evidence="3">
    <location>
        <position position="204"/>
    </location>
    <ligand>
        <name>Cu cation</name>
        <dbReference type="ChEBI" id="CHEBI:23378"/>
        <label>A2</label>
    </ligand>
</feature>
<feature type="binding site" evidence="3">
    <location>
        <position position="207"/>
    </location>
    <ligand>
        <name>Cu cation</name>
        <dbReference type="ChEBI" id="CHEBI:23378"/>
        <label>A1</label>
    </ligand>
</feature>
<name>COX2_PHYHA</name>
<evidence type="ECO:0000250" key="1">
    <source>
        <dbReference type="UniProtKB" id="P00403"/>
    </source>
</evidence>
<evidence type="ECO:0000250" key="2">
    <source>
        <dbReference type="UniProtKB" id="P00410"/>
    </source>
</evidence>
<evidence type="ECO:0000250" key="3">
    <source>
        <dbReference type="UniProtKB" id="P68530"/>
    </source>
</evidence>
<evidence type="ECO:0000305" key="4"/>
<accession>Q37596</accession>
<dbReference type="EC" id="7.1.1.9"/>
<dbReference type="EMBL" id="M80906">
    <property type="protein sequence ID" value="AAA65041.1"/>
    <property type="molecule type" value="Genomic_DNA"/>
</dbReference>
<dbReference type="SMR" id="Q37596"/>
<dbReference type="GO" id="GO:0005743">
    <property type="term" value="C:mitochondrial inner membrane"/>
    <property type="evidence" value="ECO:0007669"/>
    <property type="project" value="UniProtKB-SubCell"/>
</dbReference>
<dbReference type="GO" id="GO:0045277">
    <property type="term" value="C:respiratory chain complex IV"/>
    <property type="evidence" value="ECO:0000250"/>
    <property type="project" value="UniProtKB"/>
</dbReference>
<dbReference type="GO" id="GO:0005507">
    <property type="term" value="F:copper ion binding"/>
    <property type="evidence" value="ECO:0007669"/>
    <property type="project" value="InterPro"/>
</dbReference>
<dbReference type="GO" id="GO:0004129">
    <property type="term" value="F:cytochrome-c oxidase activity"/>
    <property type="evidence" value="ECO:0007669"/>
    <property type="project" value="UniProtKB-EC"/>
</dbReference>
<dbReference type="GO" id="GO:0042773">
    <property type="term" value="P:ATP synthesis coupled electron transport"/>
    <property type="evidence" value="ECO:0007669"/>
    <property type="project" value="TreeGrafter"/>
</dbReference>
<dbReference type="CDD" id="cd13912">
    <property type="entry name" value="CcO_II_C"/>
    <property type="match status" value="1"/>
</dbReference>
<dbReference type="FunFam" id="1.10.287.90:FF:000001">
    <property type="entry name" value="Cytochrome c oxidase subunit 2"/>
    <property type="match status" value="1"/>
</dbReference>
<dbReference type="FunFam" id="2.60.40.420:FF:000001">
    <property type="entry name" value="Cytochrome c oxidase subunit 2"/>
    <property type="match status" value="1"/>
</dbReference>
<dbReference type="Gene3D" id="1.10.287.90">
    <property type="match status" value="1"/>
</dbReference>
<dbReference type="Gene3D" id="2.60.40.420">
    <property type="entry name" value="Cupredoxins - blue copper proteins"/>
    <property type="match status" value="1"/>
</dbReference>
<dbReference type="InterPro" id="IPR045187">
    <property type="entry name" value="CcO_II"/>
</dbReference>
<dbReference type="InterPro" id="IPR002429">
    <property type="entry name" value="CcO_II-like_C"/>
</dbReference>
<dbReference type="InterPro" id="IPR034210">
    <property type="entry name" value="CcO_II_C"/>
</dbReference>
<dbReference type="InterPro" id="IPR001505">
    <property type="entry name" value="Copper_CuA"/>
</dbReference>
<dbReference type="InterPro" id="IPR008972">
    <property type="entry name" value="Cupredoxin"/>
</dbReference>
<dbReference type="InterPro" id="IPR014222">
    <property type="entry name" value="Cyt_c_oxidase_su2"/>
</dbReference>
<dbReference type="InterPro" id="IPR011759">
    <property type="entry name" value="Cyt_c_oxidase_su2_TM_dom"/>
</dbReference>
<dbReference type="InterPro" id="IPR036257">
    <property type="entry name" value="Cyt_c_oxidase_su2_TM_sf"/>
</dbReference>
<dbReference type="NCBIfam" id="TIGR02866">
    <property type="entry name" value="CoxB"/>
    <property type="match status" value="1"/>
</dbReference>
<dbReference type="PANTHER" id="PTHR22888:SF9">
    <property type="entry name" value="CYTOCHROME C OXIDASE SUBUNIT 2"/>
    <property type="match status" value="1"/>
</dbReference>
<dbReference type="PANTHER" id="PTHR22888">
    <property type="entry name" value="CYTOCHROME C OXIDASE, SUBUNIT II"/>
    <property type="match status" value="1"/>
</dbReference>
<dbReference type="Pfam" id="PF00116">
    <property type="entry name" value="COX2"/>
    <property type="match status" value="1"/>
</dbReference>
<dbReference type="Pfam" id="PF02790">
    <property type="entry name" value="COX2_TM"/>
    <property type="match status" value="1"/>
</dbReference>
<dbReference type="PRINTS" id="PR01166">
    <property type="entry name" value="CYCOXIDASEII"/>
</dbReference>
<dbReference type="SUPFAM" id="SSF49503">
    <property type="entry name" value="Cupredoxins"/>
    <property type="match status" value="1"/>
</dbReference>
<dbReference type="SUPFAM" id="SSF81464">
    <property type="entry name" value="Cytochrome c oxidase subunit II-like, transmembrane region"/>
    <property type="match status" value="1"/>
</dbReference>
<dbReference type="PROSITE" id="PS00078">
    <property type="entry name" value="COX2"/>
    <property type="match status" value="1"/>
</dbReference>
<dbReference type="PROSITE" id="PS50857">
    <property type="entry name" value="COX2_CUA"/>
    <property type="match status" value="1"/>
</dbReference>
<dbReference type="PROSITE" id="PS50999">
    <property type="entry name" value="COX2_TM"/>
    <property type="match status" value="1"/>
</dbReference>
<comment type="function">
    <text evidence="2">Component of the cytochrome c oxidase, the last enzyme in the mitochondrial electron transport chain which drives oxidative phosphorylation. The respiratory chain contains 3 multisubunit complexes succinate dehydrogenase (complex II, CII), ubiquinol-cytochrome c oxidoreductase (cytochrome b-c1 complex, complex III, CIII) and cytochrome c oxidase (complex IV, CIV), that cooperate to transfer electrons derived from NADH and succinate to molecular oxygen, creating an electrochemical gradient over the inner membrane that drives transmembrane transport and the ATP synthase. Cytochrome c oxidase is the component of the respiratory chain that catalyzes the reduction of oxygen to water. Electrons originating from reduced cytochrome c in the intermembrane space (IMS) are transferred via the dinuclear copper A center (CU(A)) of subunit 2 and heme A of subunit 1 to the active site in subunit 1, a binuclear center (BNC) formed by heme A3 and copper B (CU(B)). The BNC reduces molecular oxygen to 2 water molecules using 4 electrons from cytochrome c in the IMS and 4 protons from the mitochondrial matrix.</text>
</comment>
<comment type="catalytic activity">
    <reaction evidence="2">
        <text>4 Fe(II)-[cytochrome c] + O2 + 8 H(+)(in) = 4 Fe(III)-[cytochrome c] + 2 H2O + 4 H(+)(out)</text>
        <dbReference type="Rhea" id="RHEA:11436"/>
        <dbReference type="Rhea" id="RHEA-COMP:10350"/>
        <dbReference type="Rhea" id="RHEA-COMP:14399"/>
        <dbReference type="ChEBI" id="CHEBI:15377"/>
        <dbReference type="ChEBI" id="CHEBI:15378"/>
        <dbReference type="ChEBI" id="CHEBI:15379"/>
        <dbReference type="ChEBI" id="CHEBI:29033"/>
        <dbReference type="ChEBI" id="CHEBI:29034"/>
        <dbReference type="EC" id="7.1.1.9"/>
    </reaction>
    <physiologicalReaction direction="left-to-right" evidence="2">
        <dbReference type="Rhea" id="RHEA:11437"/>
    </physiologicalReaction>
</comment>
<comment type="cofactor">
    <cofactor evidence="3">
        <name>Cu cation</name>
        <dbReference type="ChEBI" id="CHEBI:23378"/>
    </cofactor>
    <text evidence="3">Binds a dinuclear copper A center per subunit.</text>
</comment>
<comment type="subunit">
    <text evidence="1 3">Component of the cytochrome c oxidase (complex IV, CIV), a multisubunit enzyme composed of 14 subunits. The complex is composed of a catalytic core of 3 subunits MT-CO1, MT-CO2 and MT-CO3, encoded in the mitochondrial DNA, and 11 supernumerary subunits COX4I, COX5A, COX5B, COX6A, COX6B, COX6C, COX7A, COX7B, COX7C, COX8 and NDUFA4, which are encoded in the nuclear genome. The complex exists as a monomer or a dimer and forms supercomplexes (SCs) in the inner mitochondrial membrane with NADH-ubiquinone oxidoreductase (complex I, CI) and ubiquinol-cytochrome c oxidoreductase (cytochrome b-c1 complex, complex III, CIII), resulting in different assemblies (supercomplex SCI(1)III(2)IV(1) and megacomplex MCI(2)III(2)IV(2)) (By similarity). Found in a complex with TMEM177, COA6, COX18, COX20, SCO1 and SCO2. Interacts with TMEM177 in a COX20-dependent manner. Interacts with COX20. Interacts with COX16 (By similarity).</text>
</comment>
<comment type="subcellular location">
    <subcellularLocation>
        <location evidence="3">Mitochondrion inner membrane</location>
        <topology evidence="3">Multi-pass membrane protein</topology>
    </subcellularLocation>
</comment>
<comment type="similarity">
    <text evidence="4">Belongs to the cytochrome c oxidase subunit 2 family.</text>
</comment>
<proteinExistence type="inferred from homology"/>
<reference key="1">
    <citation type="journal article" date="1991" name="Proc. Natl. Acad. Sci. U.S.A.">
        <title>Molecular phylogeny of the superorder Archonta.</title>
        <authorList>
            <person name="Adkins R.M."/>
            <person name="Honeycutt R.L."/>
        </authorList>
    </citation>
    <scope>NUCLEOTIDE SEQUENCE [GENOMIC DNA]</scope>
</reference>